<feature type="chain" id="PRO_0000305260" description="Protein TIPIN homolog">
    <location>
        <begin position="1"/>
        <end position="233"/>
    </location>
</feature>
<feature type="region of interest" description="Disordered" evidence="2">
    <location>
        <begin position="1"/>
        <end position="39"/>
    </location>
</feature>
<feature type="region of interest" description="Disordered" evidence="2">
    <location>
        <begin position="134"/>
        <end position="233"/>
    </location>
</feature>
<feature type="compositionally biased region" description="Acidic residues" evidence="2">
    <location>
        <begin position="1"/>
        <end position="14"/>
    </location>
</feature>
<feature type="compositionally biased region" description="Basic and acidic residues" evidence="2">
    <location>
        <begin position="163"/>
        <end position="190"/>
    </location>
</feature>
<feature type="compositionally biased region" description="Basic and acidic residues" evidence="2">
    <location>
        <begin position="197"/>
        <end position="216"/>
    </location>
</feature>
<feature type="compositionally biased region" description="Acidic residues" evidence="2">
    <location>
        <begin position="217"/>
        <end position="227"/>
    </location>
</feature>
<comment type="function">
    <text evidence="1">Required for normal progression of S-phase. Important for cell survival after DNA damage or replication stress.</text>
</comment>
<comment type="subcellular location">
    <subcellularLocation>
        <location evidence="1">Cytoplasm</location>
    </subcellularLocation>
    <subcellularLocation>
        <location evidence="1">Nucleus</location>
    </subcellularLocation>
</comment>
<comment type="similarity">
    <text evidence="3">Belongs to the CSM3 family.</text>
</comment>
<name>TIPIN_CAEEL</name>
<gene>
    <name evidence="4" type="primary">tipn-1</name>
    <name evidence="4" type="ORF">F23C8.9</name>
</gene>
<sequence>MDEMEDFFENDELDREPSPMGDEAIEDNSGEGGTRRVVEPKLLRTKRLANPRLALNERILTGPKGISALRETLKDFKPNPKDDPYANLEKLMKKYAYWGHLMFPKMKTEDVLNRVETLGTRRQVKVFMIKHRLGETGEDSEHEEQENQKNGIIDDGASDNDDDLFKDLPEKEVTTEKAKNSEKSDQKTAEIDENVEEEYRMMEEERLREEQEAKEAADEDALMEDFGDMNNDW</sequence>
<evidence type="ECO:0000250" key="1">
    <source>
        <dbReference type="UniProtKB" id="Q9BVW5"/>
    </source>
</evidence>
<evidence type="ECO:0000256" key="2">
    <source>
        <dbReference type="SAM" id="MobiDB-lite"/>
    </source>
</evidence>
<evidence type="ECO:0000305" key="3"/>
<evidence type="ECO:0000312" key="4">
    <source>
        <dbReference type="WormBase" id="F23C8.9"/>
    </source>
</evidence>
<dbReference type="EMBL" id="FO081207">
    <property type="protein sequence ID" value="CCD69893.1"/>
    <property type="molecule type" value="Genomic_DNA"/>
</dbReference>
<dbReference type="PIR" id="T33829">
    <property type="entry name" value="T33829"/>
</dbReference>
<dbReference type="RefSeq" id="NP_490977.1">
    <property type="nucleotide sequence ID" value="NM_058576.6"/>
</dbReference>
<dbReference type="PDB" id="8OUW">
    <property type="method" value="EM"/>
    <property type="resolution" value="3.75 A"/>
    <property type="chains" value="L=1-233"/>
</dbReference>
<dbReference type="PDBsum" id="8OUW"/>
<dbReference type="EMDB" id="EMD-17204"/>
<dbReference type="SMR" id="Q9TXI0"/>
<dbReference type="BioGRID" id="37288">
    <property type="interactions" value="1"/>
</dbReference>
<dbReference type="FunCoup" id="Q9TXI0">
    <property type="interactions" value="1675"/>
</dbReference>
<dbReference type="STRING" id="6239.F23C8.9.1"/>
<dbReference type="PaxDb" id="6239-F23C8.9"/>
<dbReference type="PeptideAtlas" id="Q9TXI0"/>
<dbReference type="EnsemblMetazoa" id="F23C8.9.1">
    <property type="protein sequence ID" value="F23C8.9.1"/>
    <property type="gene ID" value="WBGene00017738"/>
</dbReference>
<dbReference type="GeneID" id="171803"/>
<dbReference type="KEGG" id="cel:CELE_F23C8.9"/>
<dbReference type="UCSC" id="F23C8.9">
    <property type="organism name" value="c. elegans"/>
</dbReference>
<dbReference type="AGR" id="WB:WBGene00017738"/>
<dbReference type="CTD" id="171803"/>
<dbReference type="WormBase" id="F23C8.9">
    <property type="protein sequence ID" value="CE20718"/>
    <property type="gene ID" value="WBGene00017738"/>
    <property type="gene designation" value="tipn-1"/>
</dbReference>
<dbReference type="eggNOG" id="KOG3004">
    <property type="taxonomic scope" value="Eukaryota"/>
</dbReference>
<dbReference type="GeneTree" id="ENSGT00390000005764"/>
<dbReference type="HOGENOM" id="CLU_1181146_0_0_1"/>
<dbReference type="InParanoid" id="Q9TXI0"/>
<dbReference type="OMA" id="MKKYAYW"/>
<dbReference type="OrthoDB" id="437078at2759"/>
<dbReference type="PhylomeDB" id="Q9TXI0"/>
<dbReference type="PRO" id="PR:Q9TXI0"/>
<dbReference type="Proteomes" id="UP000001940">
    <property type="component" value="Chromosome I"/>
</dbReference>
<dbReference type="Bgee" id="WBGene00017738">
    <property type="expression patterns" value="Expressed in embryo and 4 other cell types or tissues"/>
</dbReference>
<dbReference type="GO" id="GO:0000785">
    <property type="term" value="C:chromatin"/>
    <property type="evidence" value="ECO:0000250"/>
    <property type="project" value="UniProtKB"/>
</dbReference>
<dbReference type="GO" id="GO:0005737">
    <property type="term" value="C:cytoplasm"/>
    <property type="evidence" value="ECO:0007669"/>
    <property type="project" value="UniProtKB-SubCell"/>
</dbReference>
<dbReference type="GO" id="GO:0005634">
    <property type="term" value="C:nucleus"/>
    <property type="evidence" value="ECO:0000250"/>
    <property type="project" value="UniProtKB"/>
</dbReference>
<dbReference type="GO" id="GO:0031298">
    <property type="term" value="C:replication fork protection complex"/>
    <property type="evidence" value="ECO:0000250"/>
    <property type="project" value="WormBase"/>
</dbReference>
<dbReference type="GO" id="GO:0003677">
    <property type="term" value="F:DNA binding"/>
    <property type="evidence" value="ECO:0000318"/>
    <property type="project" value="GO_Central"/>
</dbReference>
<dbReference type="GO" id="GO:0044770">
    <property type="term" value="P:cell cycle phase transition"/>
    <property type="evidence" value="ECO:0000250"/>
    <property type="project" value="UniProtKB"/>
</dbReference>
<dbReference type="GO" id="GO:0051301">
    <property type="term" value="P:cell division"/>
    <property type="evidence" value="ECO:0007669"/>
    <property type="project" value="UniProtKB-KW"/>
</dbReference>
<dbReference type="GO" id="GO:0000076">
    <property type="term" value="P:DNA replication checkpoint signaling"/>
    <property type="evidence" value="ECO:0000250"/>
    <property type="project" value="UniProtKB"/>
</dbReference>
<dbReference type="GO" id="GO:0031573">
    <property type="term" value="P:mitotic intra-S DNA damage checkpoint signaling"/>
    <property type="evidence" value="ECO:0000250"/>
    <property type="project" value="UniProtKB"/>
</dbReference>
<dbReference type="GO" id="GO:0008284">
    <property type="term" value="P:positive regulation of cell population proliferation"/>
    <property type="evidence" value="ECO:0000250"/>
    <property type="project" value="UniProtKB"/>
</dbReference>
<dbReference type="GO" id="GO:0043111">
    <property type="term" value="P:replication fork arrest"/>
    <property type="evidence" value="ECO:0000318"/>
    <property type="project" value="GO_Central"/>
</dbReference>
<dbReference type="GO" id="GO:0031297">
    <property type="term" value="P:replication fork processing"/>
    <property type="evidence" value="ECO:0007669"/>
    <property type="project" value="InterPro"/>
</dbReference>
<dbReference type="InterPro" id="IPR012923">
    <property type="entry name" value="Csm3"/>
</dbReference>
<dbReference type="InterPro" id="IPR040038">
    <property type="entry name" value="TIPIN/Csm3/Swi3"/>
</dbReference>
<dbReference type="PANTHER" id="PTHR13220">
    <property type="entry name" value="TIMELESS INTERACTING-RELATED"/>
    <property type="match status" value="1"/>
</dbReference>
<dbReference type="PANTHER" id="PTHR13220:SF11">
    <property type="entry name" value="TIMELESS-INTERACTING PROTEIN"/>
    <property type="match status" value="1"/>
</dbReference>
<dbReference type="Pfam" id="PF07962">
    <property type="entry name" value="Swi3"/>
    <property type="match status" value="1"/>
</dbReference>
<organism>
    <name type="scientific">Caenorhabditis elegans</name>
    <dbReference type="NCBI Taxonomy" id="6239"/>
    <lineage>
        <taxon>Eukaryota</taxon>
        <taxon>Metazoa</taxon>
        <taxon>Ecdysozoa</taxon>
        <taxon>Nematoda</taxon>
        <taxon>Chromadorea</taxon>
        <taxon>Rhabditida</taxon>
        <taxon>Rhabditina</taxon>
        <taxon>Rhabditomorpha</taxon>
        <taxon>Rhabditoidea</taxon>
        <taxon>Rhabditidae</taxon>
        <taxon>Peloderinae</taxon>
        <taxon>Caenorhabditis</taxon>
    </lineage>
</organism>
<keyword id="KW-0002">3D-structure</keyword>
<keyword id="KW-0131">Cell cycle</keyword>
<keyword id="KW-0132">Cell division</keyword>
<keyword id="KW-0963">Cytoplasm</keyword>
<keyword id="KW-0227">DNA damage</keyword>
<keyword id="KW-0498">Mitosis</keyword>
<keyword id="KW-0539">Nucleus</keyword>
<keyword id="KW-1185">Reference proteome</keyword>
<accession>Q9TXI0</accession>
<reference key="1">
    <citation type="journal article" date="1998" name="Science">
        <title>Genome sequence of the nematode C. elegans: a platform for investigating biology.</title>
        <authorList>
            <consortium name="The C. elegans sequencing consortium"/>
        </authorList>
    </citation>
    <scope>NUCLEOTIDE SEQUENCE [LARGE SCALE GENOMIC DNA]</scope>
    <source>
        <strain>Bristol N2</strain>
    </source>
</reference>
<protein>
    <recommendedName>
        <fullName>Protein TIPIN homolog</fullName>
    </recommendedName>
    <alternativeName>
        <fullName>CSM3 homolog</fullName>
    </alternativeName>
</protein>
<proteinExistence type="evidence at protein level"/>